<reference key="1">
    <citation type="journal article" date="1991" name="FEMS Microbiol. Lett.">
        <title>Analysis of the first two genes of the CS1 fimbrial operon in human enterotoxigenic Escherichia coli of serotype 0139:H28.</title>
        <authorList>
            <person name="Jordi B.J.A.M."/>
            <person name="van Vliet A.H.M."/>
            <person name="Willshaw G.A."/>
            <person name="van der Zeijst B.A.M."/>
            <person name="Gaastra W."/>
        </authorList>
    </citation>
    <scope>NUCLEOTIDE SEQUENCE [GENOMIC DNA]</scope>
    <source>
        <strain>O139:H28 / ETEC</strain>
    </source>
</reference>
<reference key="2">
    <citation type="submission" date="1992-07" db="EMBL/GenBank/DDBJ databases">
        <authorList>
            <person name="Scott J.R."/>
            <person name="Wakefield J.C."/>
            <person name="Russel P."/>
            <person name="Orndorff P.E."/>
            <person name="Froehlich B.J."/>
        </authorList>
    </citation>
    <scope>NUCLEOTIDE SEQUENCE [GENOMIC DNA]</scope>
    <source>
        <strain>ETEC</strain>
    </source>
</reference>
<geneLocation type="plasmid">
    <name>pDEP23</name>
</geneLocation>
<keyword id="KW-0281">Fimbrium</keyword>
<keyword id="KW-0614">Plasmid</keyword>
<keyword id="KW-0732">Signal</keyword>
<dbReference type="EMBL" id="X62879">
    <property type="protein sequence ID" value="CAA44672.1"/>
    <property type="molecule type" value="Genomic_DNA"/>
</dbReference>
<dbReference type="EMBL" id="X62495">
    <property type="protein sequence ID" value="CAA44361.1"/>
    <property type="molecule type" value="Genomic_DNA"/>
</dbReference>
<dbReference type="PIR" id="S24267">
    <property type="entry name" value="S24267"/>
</dbReference>
<dbReference type="RefSeq" id="WP_001393302.1">
    <property type="nucleotide sequence ID" value="NZ_NNTX01000083.1"/>
</dbReference>
<dbReference type="SMR" id="P25731"/>
<dbReference type="GO" id="GO:0009289">
    <property type="term" value="C:pilus"/>
    <property type="evidence" value="ECO:0007669"/>
    <property type="project" value="UniProtKB-SubCell"/>
</dbReference>
<dbReference type="Gene3D" id="2.60.40.3970">
    <property type="match status" value="1"/>
</dbReference>
<dbReference type="Gene3D" id="2.60.40.10">
    <property type="entry name" value="Immunoglobulins"/>
    <property type="match status" value="1"/>
</dbReference>
<dbReference type="InterPro" id="IPR013783">
    <property type="entry name" value="Ig-like_fold"/>
</dbReference>
<comment type="function">
    <text>Might function as a shuttle protein in the transport of fimbria through the periplasmic space or might function as an adhesin.</text>
</comment>
<comment type="subcellular location">
    <subcellularLocation>
        <location evidence="2">Fimbrium</location>
    </subcellularLocation>
</comment>
<protein>
    <recommendedName>
        <fullName>CS1 fimbrial subunit B</fullName>
    </recommendedName>
</protein>
<evidence type="ECO:0000255" key="1"/>
<evidence type="ECO:0000305" key="2"/>
<accession>P25731</accession>
<sequence>MRKLFLSLLMIPFVAKANFMIYPISKEIKGGSSELIRIYSKSKDTQYIKVYTKKVLNPGTKEEYEVDTPNWEGGLVTTPSKVILPGGGSKSVRLSQLKDISSEDVYRVYFESIKPEKQDGLSKNKSLKTDLSVNIIYAALIRVLPKDGKSDMRASLSPKSSLLIKNTGNVRVGIKDAFFCKKTSINNDDCIKKTYNKNIYPGSSFDTGVIQNGFSHIFIDSVDGSAGKQGKRMLISIH</sequence>
<gene>
    <name type="primary">csoB</name>
    <name type="synonym">cooB</name>
</gene>
<feature type="signal peptide" evidence="1">
    <location>
        <begin position="1"/>
        <end position="17"/>
    </location>
</feature>
<feature type="chain" id="PRO_0000009246" description="CS1 fimbrial subunit B">
    <location>
        <begin position="18"/>
        <end position="238"/>
    </location>
</feature>
<name>CSOB_ECOLX</name>
<proteinExistence type="inferred from homology"/>
<organism>
    <name type="scientific">Escherichia coli</name>
    <dbReference type="NCBI Taxonomy" id="562"/>
    <lineage>
        <taxon>Bacteria</taxon>
        <taxon>Pseudomonadati</taxon>
        <taxon>Pseudomonadota</taxon>
        <taxon>Gammaproteobacteria</taxon>
        <taxon>Enterobacterales</taxon>
        <taxon>Enterobacteriaceae</taxon>
        <taxon>Escherichia</taxon>
    </lineage>
</organism>